<accession>B9DJL1</accession>
<name>WHIA_STACT</name>
<keyword id="KW-0131">Cell cycle</keyword>
<keyword id="KW-0132">Cell division</keyword>
<keyword id="KW-0238">DNA-binding</keyword>
<keyword id="KW-1185">Reference proteome</keyword>
<reference key="1">
    <citation type="journal article" date="2009" name="Appl. Environ. Microbiol.">
        <title>Genome analysis of the meat starter culture bacterium Staphylococcus carnosus TM300.</title>
        <authorList>
            <person name="Rosenstein R."/>
            <person name="Nerz C."/>
            <person name="Biswas L."/>
            <person name="Resch A."/>
            <person name="Raddatz G."/>
            <person name="Schuster S.C."/>
            <person name="Goetz F."/>
        </authorList>
    </citation>
    <scope>NUCLEOTIDE SEQUENCE [LARGE SCALE GENOMIC DNA]</scope>
    <source>
        <strain>TM300</strain>
    </source>
</reference>
<sequence length="314" mass="35810">MSFASDMKNELTRIDVDEKNARAELSALIRMNGALSLSNQQFVINVQTENATTARRIYSLIKKVFNIEVEILVRKKMKLKKNNIYICRTKVKSREILDELGILKDGVFTHAIDPDMIQDDEMKRSYLRGAFLAGGSVNNPETSSYHLEIFSLYENHSEGLAELMNEYELNAKHLERKKGSIVYLKEAEKISDFLSLIGGYQAMLKFEDVRIVRDMRNSVNRLVNCETANLNKTVSAAMRQVESIQLIDQEIGIENLPERLKEIAKLRVENQDVSLKELGEMVSTGTISKSGVNHRLRKLNELADKIRSGEHIDM</sequence>
<feature type="chain" id="PRO_0000376565" description="Probable cell division protein WhiA">
    <location>
        <begin position="1"/>
        <end position="314"/>
    </location>
</feature>
<feature type="DNA-binding region" description="H-T-H motif" evidence="1">
    <location>
        <begin position="274"/>
        <end position="308"/>
    </location>
</feature>
<gene>
    <name evidence="1" type="primary">whiA</name>
    <name type="ordered locus">Sca_0416</name>
</gene>
<proteinExistence type="inferred from homology"/>
<comment type="function">
    <text evidence="1">Involved in cell division and chromosome segregation.</text>
</comment>
<comment type="similarity">
    <text evidence="1">Belongs to the WhiA family.</text>
</comment>
<protein>
    <recommendedName>
        <fullName evidence="1">Probable cell division protein WhiA</fullName>
    </recommendedName>
</protein>
<evidence type="ECO:0000255" key="1">
    <source>
        <dbReference type="HAMAP-Rule" id="MF_01420"/>
    </source>
</evidence>
<organism>
    <name type="scientific">Staphylococcus carnosus (strain TM300)</name>
    <dbReference type="NCBI Taxonomy" id="396513"/>
    <lineage>
        <taxon>Bacteria</taxon>
        <taxon>Bacillati</taxon>
        <taxon>Bacillota</taxon>
        <taxon>Bacilli</taxon>
        <taxon>Bacillales</taxon>
        <taxon>Staphylococcaceae</taxon>
        <taxon>Staphylococcus</taxon>
    </lineage>
</organism>
<dbReference type="EMBL" id="AM295250">
    <property type="protein sequence ID" value="CAL27330.1"/>
    <property type="molecule type" value="Genomic_DNA"/>
</dbReference>
<dbReference type="RefSeq" id="WP_015899674.1">
    <property type="nucleotide sequence ID" value="NC_012121.1"/>
</dbReference>
<dbReference type="SMR" id="B9DJL1"/>
<dbReference type="GeneID" id="93795345"/>
<dbReference type="KEGG" id="sca:SCA_0416"/>
<dbReference type="eggNOG" id="COG1481">
    <property type="taxonomic scope" value="Bacteria"/>
</dbReference>
<dbReference type="HOGENOM" id="CLU_053282_0_0_9"/>
<dbReference type="OrthoDB" id="401278at2"/>
<dbReference type="BioCyc" id="SCAR396513:SCA_RS02115-MONOMER"/>
<dbReference type="Proteomes" id="UP000000444">
    <property type="component" value="Chromosome"/>
</dbReference>
<dbReference type="GO" id="GO:0003677">
    <property type="term" value="F:DNA binding"/>
    <property type="evidence" value="ECO:0007669"/>
    <property type="project" value="UniProtKB-UniRule"/>
</dbReference>
<dbReference type="GO" id="GO:0051301">
    <property type="term" value="P:cell division"/>
    <property type="evidence" value="ECO:0007669"/>
    <property type="project" value="UniProtKB-UniRule"/>
</dbReference>
<dbReference type="GO" id="GO:0043937">
    <property type="term" value="P:regulation of sporulation"/>
    <property type="evidence" value="ECO:0007669"/>
    <property type="project" value="InterPro"/>
</dbReference>
<dbReference type="FunFam" id="3.10.28.10:FF:000002">
    <property type="entry name" value="Probable cell division protein WhiA"/>
    <property type="match status" value="1"/>
</dbReference>
<dbReference type="Gene3D" id="3.10.28.10">
    <property type="entry name" value="Homing endonucleases"/>
    <property type="match status" value="1"/>
</dbReference>
<dbReference type="HAMAP" id="MF_01420">
    <property type="entry name" value="HTH_type_WhiA"/>
    <property type="match status" value="1"/>
</dbReference>
<dbReference type="InterPro" id="IPR027434">
    <property type="entry name" value="Homing_endonucl"/>
</dbReference>
<dbReference type="InterPro" id="IPR018478">
    <property type="entry name" value="Sporu_reg_WhiA_N_dom"/>
</dbReference>
<dbReference type="InterPro" id="IPR003802">
    <property type="entry name" value="Sporulation_regulator_WhiA"/>
</dbReference>
<dbReference type="InterPro" id="IPR023054">
    <property type="entry name" value="Sporulation_regulator_WhiA_C"/>
</dbReference>
<dbReference type="InterPro" id="IPR039518">
    <property type="entry name" value="WhiA_LAGLIDADG_dom"/>
</dbReference>
<dbReference type="NCBIfam" id="TIGR00647">
    <property type="entry name" value="DNA_bind_WhiA"/>
    <property type="match status" value="1"/>
</dbReference>
<dbReference type="PANTHER" id="PTHR37307">
    <property type="entry name" value="CELL DIVISION PROTEIN WHIA-RELATED"/>
    <property type="match status" value="1"/>
</dbReference>
<dbReference type="PANTHER" id="PTHR37307:SF1">
    <property type="entry name" value="CELL DIVISION PROTEIN WHIA-RELATED"/>
    <property type="match status" value="1"/>
</dbReference>
<dbReference type="Pfam" id="PF02650">
    <property type="entry name" value="HTH_WhiA"/>
    <property type="match status" value="1"/>
</dbReference>
<dbReference type="Pfam" id="PF14527">
    <property type="entry name" value="LAGLIDADG_WhiA"/>
    <property type="match status" value="1"/>
</dbReference>
<dbReference type="Pfam" id="PF10298">
    <property type="entry name" value="WhiA_N"/>
    <property type="match status" value="1"/>
</dbReference>
<dbReference type="SUPFAM" id="SSF55608">
    <property type="entry name" value="Homing endonucleases"/>
    <property type="match status" value="1"/>
</dbReference>